<name>TM163_HUMAN</name>
<protein>
    <recommendedName>
        <fullName>Transmembrane protein 163</fullName>
    </recommendedName>
</protein>
<sequence>MEPAAGIQRRSSQGPTVPPPPRGHAPPAAAPGPAPLSSPVREPPQLEEERQVRISESGQFSDGLEDRGLLESSTRLKPHEAQNYRKKALWVSWFSIIVTLALAVAAFTVSVMRYSASAFGFAFDAILDVLSSAIVLWRYSNAAAVHSAHREYIACVILGVIFLLSSICIVVKAIHDLSTRLLPEVDDFLFSVSILSGILCSILAVLKFMLGKVLTSRALITDGFNSLVGGVMGFSILLSAEVFKHDSAVWYLDGSIGVLIGLTIFAYGVKLLIDMVPRVRQTRHYEMFE</sequence>
<reference key="1">
    <citation type="journal article" date="2007" name="BMC Genomics">
        <title>The full-ORF clone resource of the German cDNA consortium.</title>
        <authorList>
            <person name="Bechtel S."/>
            <person name="Rosenfelder H."/>
            <person name="Duda A."/>
            <person name="Schmidt C.P."/>
            <person name="Ernst U."/>
            <person name="Wellenreuther R."/>
            <person name="Mehrle A."/>
            <person name="Schuster C."/>
            <person name="Bahr A."/>
            <person name="Bloecker H."/>
            <person name="Heubner D."/>
            <person name="Hoerlein A."/>
            <person name="Michel G."/>
            <person name="Wedler H."/>
            <person name="Koehrer K."/>
            <person name="Ottenwaelder B."/>
            <person name="Poustka A."/>
            <person name="Wiemann S."/>
            <person name="Schupp I."/>
        </authorList>
    </citation>
    <scope>NUCLEOTIDE SEQUENCE [LARGE SCALE MRNA] (ISOFORMS 2 AND 3)</scope>
    <source>
        <tissue>Kidney</tissue>
        <tissue>Stomach</tissue>
    </source>
</reference>
<reference key="2">
    <citation type="journal article" date="2005" name="Nature">
        <title>Generation and annotation of the DNA sequences of human chromosomes 2 and 4.</title>
        <authorList>
            <person name="Hillier L.W."/>
            <person name="Graves T.A."/>
            <person name="Fulton R.S."/>
            <person name="Fulton L.A."/>
            <person name="Pepin K.H."/>
            <person name="Minx P."/>
            <person name="Wagner-McPherson C."/>
            <person name="Layman D."/>
            <person name="Wylie K."/>
            <person name="Sekhon M."/>
            <person name="Becker M.C."/>
            <person name="Fewell G.A."/>
            <person name="Delehaunty K.D."/>
            <person name="Miner T.L."/>
            <person name="Nash W.E."/>
            <person name="Kremitzki C."/>
            <person name="Oddy L."/>
            <person name="Du H."/>
            <person name="Sun H."/>
            <person name="Bradshaw-Cordum H."/>
            <person name="Ali J."/>
            <person name="Carter J."/>
            <person name="Cordes M."/>
            <person name="Harris A."/>
            <person name="Isak A."/>
            <person name="van Brunt A."/>
            <person name="Nguyen C."/>
            <person name="Du F."/>
            <person name="Courtney L."/>
            <person name="Kalicki J."/>
            <person name="Ozersky P."/>
            <person name="Abbott S."/>
            <person name="Armstrong J."/>
            <person name="Belter E.A."/>
            <person name="Caruso L."/>
            <person name="Cedroni M."/>
            <person name="Cotton M."/>
            <person name="Davidson T."/>
            <person name="Desai A."/>
            <person name="Elliott G."/>
            <person name="Erb T."/>
            <person name="Fronick C."/>
            <person name="Gaige T."/>
            <person name="Haakenson W."/>
            <person name="Haglund K."/>
            <person name="Holmes A."/>
            <person name="Harkins R."/>
            <person name="Kim K."/>
            <person name="Kruchowski S.S."/>
            <person name="Strong C.M."/>
            <person name="Grewal N."/>
            <person name="Goyea E."/>
            <person name="Hou S."/>
            <person name="Levy A."/>
            <person name="Martinka S."/>
            <person name="Mead K."/>
            <person name="McLellan M.D."/>
            <person name="Meyer R."/>
            <person name="Randall-Maher J."/>
            <person name="Tomlinson C."/>
            <person name="Dauphin-Kohlberg S."/>
            <person name="Kozlowicz-Reilly A."/>
            <person name="Shah N."/>
            <person name="Swearengen-Shahid S."/>
            <person name="Snider J."/>
            <person name="Strong J.T."/>
            <person name="Thompson J."/>
            <person name="Yoakum M."/>
            <person name="Leonard S."/>
            <person name="Pearman C."/>
            <person name="Trani L."/>
            <person name="Radionenko M."/>
            <person name="Waligorski J.E."/>
            <person name="Wang C."/>
            <person name="Rock S.M."/>
            <person name="Tin-Wollam A.-M."/>
            <person name="Maupin R."/>
            <person name="Latreille P."/>
            <person name="Wendl M.C."/>
            <person name="Yang S.-P."/>
            <person name="Pohl C."/>
            <person name="Wallis J.W."/>
            <person name="Spieth J."/>
            <person name="Bieri T.A."/>
            <person name="Berkowicz N."/>
            <person name="Nelson J.O."/>
            <person name="Osborne J."/>
            <person name="Ding L."/>
            <person name="Meyer R."/>
            <person name="Sabo A."/>
            <person name="Shotland Y."/>
            <person name="Sinha P."/>
            <person name="Wohldmann P.E."/>
            <person name="Cook L.L."/>
            <person name="Hickenbotham M.T."/>
            <person name="Eldred J."/>
            <person name="Williams D."/>
            <person name="Jones T.A."/>
            <person name="She X."/>
            <person name="Ciccarelli F.D."/>
            <person name="Izaurralde E."/>
            <person name="Taylor J."/>
            <person name="Schmutz J."/>
            <person name="Myers R.M."/>
            <person name="Cox D.R."/>
            <person name="Huang X."/>
            <person name="McPherson J.D."/>
            <person name="Mardis E.R."/>
            <person name="Clifton S.W."/>
            <person name="Warren W.C."/>
            <person name="Chinwalla A.T."/>
            <person name="Eddy S.R."/>
            <person name="Marra M.A."/>
            <person name="Ovcharenko I."/>
            <person name="Furey T.S."/>
            <person name="Miller W."/>
            <person name="Eichler E.E."/>
            <person name="Bork P."/>
            <person name="Suyama M."/>
            <person name="Torrents D."/>
            <person name="Waterston R.H."/>
            <person name="Wilson R.K."/>
        </authorList>
    </citation>
    <scope>NUCLEOTIDE SEQUENCE [LARGE SCALE GENOMIC DNA]</scope>
</reference>
<reference key="3">
    <citation type="journal article" date="2004" name="Genome Res.">
        <title>The status, quality, and expansion of the NIH full-length cDNA project: the Mammalian Gene Collection (MGC).</title>
        <authorList>
            <consortium name="The MGC Project Team"/>
        </authorList>
    </citation>
    <scope>NUCLEOTIDE SEQUENCE [LARGE SCALE MRNA] (ISOFORM 1)</scope>
    <source>
        <tissue>Testis</tissue>
    </source>
</reference>
<reference key="4">
    <citation type="journal article" date="2014" name="Traffic">
        <title>Cellular zinc levels are modulated by TRPML1-TMEM163 interaction.</title>
        <authorList>
            <person name="Cuajungco M.P."/>
            <person name="Basilio L.C."/>
            <person name="Silva J."/>
            <person name="Hart T."/>
            <person name="Tringali J."/>
            <person name="Chen C.C."/>
            <person name="Biel M."/>
            <person name="Grimm C."/>
        </authorList>
    </citation>
    <scope>FUNCTION</scope>
    <scope>TISSUE SPECIFICITY</scope>
    <scope>SUBCELLULAR LOCATION</scope>
    <scope>INTERACTION WITH MCOLN1</scope>
    <scope>REGION</scope>
    <scope>MUTAGENESIS OF 1-MET--GLU-42 AND 1-MET--SER-72</scope>
</reference>
<reference key="5">
    <citation type="journal article" date="2019" name="Arch. Biochem. Biophys.">
        <title>Transmembrane 163 (TMEM163) protein effluxes zinc.</title>
        <authorList>
            <person name="Sanchez V.B."/>
            <person name="Ali S."/>
            <person name="Escobar A."/>
            <person name="Cuajungco M.P."/>
        </authorList>
    </citation>
    <scope>FUNCTION</scope>
    <scope>TRANSPORTER ACTIVITY</scope>
    <scope>CHARACTERIZATION OF VARIANTS ARG-61; CYS-95; PRO-193 AND LYS-286</scope>
    <scope>MUTAGENESIS OF ASP-124 AND ASP-128</scope>
</reference>
<reference key="6">
    <citation type="journal article" date="2020" name="Cell Rep.">
        <title>TMEM163 regulates ATP-gated P2X receptor and behavior.</title>
        <authorList>
            <person name="Salm E.J."/>
            <person name="Dunn P.J."/>
            <person name="Shan L."/>
            <person name="Yamasaki M."/>
            <person name="Malewicz N.M."/>
            <person name="Miyazaki T."/>
            <person name="Park J."/>
            <person name="Sumioka A."/>
            <person name="Hamer R.R.L."/>
            <person name="He W.W."/>
            <person name="Morimoto-Tomita M."/>
            <person name="LaMotte R.H."/>
            <person name="Tomita S."/>
        </authorList>
    </citation>
    <scope>FUNCTION</scope>
</reference>
<reference key="7">
    <citation type="journal article" date="2022" name="Biochem. Biophys. Rep.">
        <title>Transmembrane 163 (TMEM163) protein interacts with specific mammalian SLC30 zinc efflux transporter family members.</title>
        <authorList>
            <person name="Escobar A."/>
            <person name="Styrpejko D.J."/>
            <person name="Ali S."/>
            <person name="Cuajungco M.P."/>
        </authorList>
    </citation>
    <scope>FUNCTION</scope>
    <scope>TRANSPORTER ACTIVITY</scope>
    <scope>SUBUNIT</scope>
    <scope>INTERACTION WITH SLC30A1; SLC30A2; SLC30A3 AND SLC30A4</scope>
</reference>
<reference key="8">
    <citation type="journal article" date="2022" name="Brain">
        <title>Variants in the zinc transporter TMEM163 cause a hypomyelinating leukodystrophy.</title>
        <authorList>
            <person name="do Rosario M.C."/>
            <person name="Bey G.R."/>
            <person name="Nmezi B."/>
            <person name="Liu F."/>
            <person name="Oranburg T."/>
            <person name="Cohen A.S.A."/>
            <person name="Coffman K.A."/>
            <person name="Brown M.R."/>
            <person name="Kiselyov K."/>
            <person name="Waisfisz Q."/>
            <person name="Flohil M.T."/>
            <person name="Siddiqui S."/>
            <person name="Rosenfeld J.A."/>
            <person name="Iglesias A."/>
            <person name="Girisha K.M."/>
            <person name="Wolf N.I."/>
            <person name="Padiath Q.S."/>
            <person name="Shukla A."/>
        </authorList>
    </citation>
    <scope>VARIANTS HLD25 PRO-76; CYS-138 AND ARG-146</scope>
    <scope>INVOLVEMENT IN HLD25</scope>
    <scope>CHARACTERIZATION OF VARIANTS HLD25 PRO-76; CYS-138 AND ARG-146</scope>
</reference>
<reference key="9">
    <citation type="journal article" date="2022" name="Cells">
        <title>Functional study of TMEM163 gene variants associated with hypomyelination leukodystrophy.</title>
        <authorList>
            <person name="Yan H."/>
            <person name="Yang S."/>
            <person name="Hou Y."/>
            <person name="Ali S."/>
            <person name="Escobar A."/>
            <person name="Gao K."/>
            <person name="Duan R."/>
            <person name="Kubisiak T."/>
            <person name="Wang J."/>
            <person name="Zhang Y."/>
            <person name="Xiao J."/>
            <person name="Jiang Y."/>
            <person name="Zhang T."/>
            <person name="Wu Y."/>
            <person name="Burmeister M."/>
            <person name="Wang Q."/>
            <person name="Cuajungco M.P."/>
            <person name="Wang J."/>
        </authorList>
    </citation>
    <scope>VARIANTS HLD25 ARG-76 AND PRO-76</scope>
    <scope>CHARACTERIZATION OF VARIANTS HLD25 ARG-76 AND PRO-76</scope>
    <scope>INVOLVEMENT IN HLD25</scope>
    <scope>FUNCTION</scope>
</reference>
<dbReference type="EMBL" id="AL122044">
    <property type="protein sequence ID" value="CAB59180.2"/>
    <property type="molecule type" value="mRNA"/>
</dbReference>
<dbReference type="EMBL" id="AL833765">
    <property type="protein sequence ID" value="CAH10592.1"/>
    <property type="status" value="ALT_INIT"/>
    <property type="molecule type" value="mRNA"/>
</dbReference>
<dbReference type="EMBL" id="AC013718">
    <property type="protein sequence ID" value="AAX93249.1"/>
    <property type="molecule type" value="Genomic_DNA"/>
</dbReference>
<dbReference type="EMBL" id="AC110620">
    <property type="protein sequence ID" value="AAY24144.1"/>
    <property type="molecule type" value="Genomic_DNA"/>
</dbReference>
<dbReference type="EMBL" id="BC026170">
    <property type="protein sequence ID" value="AAH26170.1"/>
    <property type="molecule type" value="mRNA"/>
</dbReference>
<dbReference type="CCDS" id="CCDS2172.1">
    <molecule id="Q8TC26-1"/>
</dbReference>
<dbReference type="PIR" id="T34524">
    <property type="entry name" value="T34524"/>
</dbReference>
<dbReference type="RefSeq" id="NP_112185.1">
    <molecule id="Q8TC26-1"/>
    <property type="nucleotide sequence ID" value="NM_030923.5"/>
</dbReference>
<dbReference type="SMR" id="Q8TC26"/>
<dbReference type="BioGRID" id="123550">
    <property type="interactions" value="1"/>
</dbReference>
<dbReference type="FunCoup" id="Q8TC26">
    <property type="interactions" value="19"/>
</dbReference>
<dbReference type="IntAct" id="Q8TC26">
    <property type="interactions" value="5"/>
</dbReference>
<dbReference type="STRING" id="9606.ENSP00000281924"/>
<dbReference type="TCDB" id="2.A.4.8.3">
    <property type="family name" value="the cation diffusion facilitator (cdf) family"/>
</dbReference>
<dbReference type="GlyGen" id="Q8TC26">
    <property type="glycosylation" value="1 site"/>
</dbReference>
<dbReference type="iPTMnet" id="Q8TC26"/>
<dbReference type="PhosphoSitePlus" id="Q8TC26"/>
<dbReference type="SwissPalm" id="Q8TC26"/>
<dbReference type="BioMuta" id="TMEM163"/>
<dbReference type="DMDM" id="74730546"/>
<dbReference type="jPOST" id="Q8TC26"/>
<dbReference type="MassIVE" id="Q8TC26"/>
<dbReference type="PaxDb" id="9606-ENSP00000281924"/>
<dbReference type="PeptideAtlas" id="Q8TC26"/>
<dbReference type="ProteomicsDB" id="74081">
    <molecule id="Q8TC26-1"/>
</dbReference>
<dbReference type="ProteomicsDB" id="74082">
    <molecule id="Q8TC26-2"/>
</dbReference>
<dbReference type="ProteomicsDB" id="74083">
    <molecule id="Q8TC26-3"/>
</dbReference>
<dbReference type="Pumba" id="Q8TC26"/>
<dbReference type="Antibodypedia" id="33555">
    <property type="antibodies" value="39 antibodies from 13 providers"/>
</dbReference>
<dbReference type="DNASU" id="81615"/>
<dbReference type="Ensembl" id="ENST00000281924.6">
    <molecule id="Q8TC26-1"/>
    <property type="protein sequence ID" value="ENSP00000281924.6"/>
    <property type="gene ID" value="ENSG00000152128.13"/>
</dbReference>
<dbReference type="GeneID" id="81615"/>
<dbReference type="KEGG" id="hsa:81615"/>
<dbReference type="MANE-Select" id="ENST00000281924.6">
    <property type="protein sequence ID" value="ENSP00000281924.6"/>
    <property type="RefSeq nucleotide sequence ID" value="NM_030923.5"/>
    <property type="RefSeq protein sequence ID" value="NP_112185.1"/>
</dbReference>
<dbReference type="UCSC" id="uc002ttx.4">
    <molecule id="Q8TC26-1"/>
    <property type="organism name" value="human"/>
</dbReference>
<dbReference type="AGR" id="HGNC:25380"/>
<dbReference type="CTD" id="81615"/>
<dbReference type="DisGeNET" id="81615"/>
<dbReference type="GeneCards" id="TMEM163"/>
<dbReference type="HGNC" id="HGNC:25380">
    <property type="gene designation" value="TMEM163"/>
</dbReference>
<dbReference type="HPA" id="ENSG00000152128">
    <property type="expression patterns" value="Tissue enhanced (brain, pancreas)"/>
</dbReference>
<dbReference type="MalaCards" id="TMEM163"/>
<dbReference type="MIM" id="618978">
    <property type="type" value="gene"/>
</dbReference>
<dbReference type="MIM" id="620243">
    <property type="type" value="phenotype"/>
</dbReference>
<dbReference type="neXtProt" id="NX_Q8TC26"/>
<dbReference type="OpenTargets" id="ENSG00000152128"/>
<dbReference type="PharmGKB" id="PA145148025"/>
<dbReference type="VEuPathDB" id="HostDB:ENSG00000152128"/>
<dbReference type="eggNOG" id="ENOG502QW7B">
    <property type="taxonomic scope" value="Eukaryota"/>
</dbReference>
<dbReference type="GeneTree" id="ENSGT00390000001170"/>
<dbReference type="HOGENOM" id="CLU_081161_0_0_1"/>
<dbReference type="InParanoid" id="Q8TC26"/>
<dbReference type="OMA" id="IMRYSAS"/>
<dbReference type="OrthoDB" id="5980560at2759"/>
<dbReference type="PAN-GO" id="Q8TC26">
    <property type="GO annotations" value="3 GO annotations based on evolutionary models"/>
</dbReference>
<dbReference type="PhylomeDB" id="Q8TC26"/>
<dbReference type="TreeFam" id="TF330782"/>
<dbReference type="PathwayCommons" id="Q8TC26"/>
<dbReference type="SignaLink" id="Q8TC26"/>
<dbReference type="BioGRID-ORCS" id="81615">
    <property type="hits" value="13 hits in 1149 CRISPR screens"/>
</dbReference>
<dbReference type="ChiTaRS" id="TMEM163">
    <property type="organism name" value="human"/>
</dbReference>
<dbReference type="GenomeRNAi" id="81615"/>
<dbReference type="Pharos" id="Q8TC26">
    <property type="development level" value="Tbio"/>
</dbReference>
<dbReference type="PRO" id="PR:Q8TC26"/>
<dbReference type="Proteomes" id="UP000005640">
    <property type="component" value="Chromosome 2"/>
</dbReference>
<dbReference type="RNAct" id="Q8TC26">
    <property type="molecule type" value="protein"/>
</dbReference>
<dbReference type="Bgee" id="ENSG00000152128">
    <property type="expression patterns" value="Expressed in oocyte and 150 other cell types or tissues"/>
</dbReference>
<dbReference type="GO" id="GO:0031901">
    <property type="term" value="C:early endosome membrane"/>
    <property type="evidence" value="ECO:0000250"/>
    <property type="project" value="UniProtKB"/>
</dbReference>
<dbReference type="GO" id="GO:0031902">
    <property type="term" value="C:late endosome membrane"/>
    <property type="evidence" value="ECO:0007669"/>
    <property type="project" value="UniProtKB-SubCell"/>
</dbReference>
<dbReference type="GO" id="GO:0005765">
    <property type="term" value="C:lysosomal membrane"/>
    <property type="evidence" value="ECO:0007669"/>
    <property type="project" value="UniProtKB-SubCell"/>
</dbReference>
<dbReference type="GO" id="GO:0005886">
    <property type="term" value="C:plasma membrane"/>
    <property type="evidence" value="ECO:0007669"/>
    <property type="project" value="UniProtKB-SubCell"/>
</dbReference>
<dbReference type="GO" id="GO:0030672">
    <property type="term" value="C:synaptic vesicle membrane"/>
    <property type="evidence" value="ECO:0000250"/>
    <property type="project" value="UniProtKB"/>
</dbReference>
<dbReference type="GO" id="GO:0008270">
    <property type="term" value="F:zinc ion binding"/>
    <property type="evidence" value="ECO:0000250"/>
    <property type="project" value="UniProtKB"/>
</dbReference>
<dbReference type="GO" id="GO:0042552">
    <property type="term" value="P:myelination"/>
    <property type="evidence" value="ECO:0000315"/>
    <property type="project" value="UniProtKB"/>
</dbReference>
<dbReference type="GO" id="GO:0140882">
    <property type="term" value="P:zinc export across plasma membrane"/>
    <property type="evidence" value="ECO:0000314"/>
    <property type="project" value="UniProtKB"/>
</dbReference>
<dbReference type="GO" id="GO:0099180">
    <property type="term" value="P:zinc ion import into synaptic vesicle"/>
    <property type="evidence" value="ECO:0007669"/>
    <property type="project" value="Ensembl"/>
</dbReference>
<dbReference type="FunFam" id="1.20.1510.10:FF:000018">
    <property type="entry name" value="transmembrane protein 163"/>
    <property type="match status" value="1"/>
</dbReference>
<dbReference type="Gene3D" id="1.20.1510.10">
    <property type="entry name" value="Cation efflux protein transmembrane domain"/>
    <property type="match status" value="1"/>
</dbReference>
<dbReference type="InterPro" id="IPR027469">
    <property type="entry name" value="Cation_efflux_TMD_sf"/>
</dbReference>
<dbReference type="InterPro" id="IPR026765">
    <property type="entry name" value="Tmem163"/>
</dbReference>
<dbReference type="PANTHER" id="PTHR31937">
    <property type="entry name" value="TRANSMEMBRANE PROTEIN 163"/>
    <property type="match status" value="1"/>
</dbReference>
<dbReference type="PANTHER" id="PTHR31937:SF2">
    <property type="entry name" value="TRANSMEMBRANE PROTEIN 163"/>
    <property type="match status" value="1"/>
</dbReference>
<dbReference type="SUPFAM" id="SSF161111">
    <property type="entry name" value="Cation efflux protein transmembrane domain-like"/>
    <property type="match status" value="1"/>
</dbReference>
<accession>Q8TC26</accession>
<accession>Q53QM3</accession>
<accession>Q53SV7</accession>
<accession>Q69YH3</accession>
<accession>Q9UFG3</accession>
<gene>
    <name type="primary">TMEM163</name>
</gene>
<comment type="function">
    <text evidence="1 5 6 7 8 10">Zinc ion transporter that mediates zinc efflux and plays a crucial role in intracellular zinc homeostasis (PubMed:25130899, PubMed:31697912, PubMed:36204728). Binds the divalent cations Zn(2+), Ni(2+), and to a minor extent Cu(2+) (By similarity). Is a functional modulator of P2X purinoceptors, including P2RX1, P2RX3, P2RX4 and P2RX7 (PubMed:32492420). Plays a role in central nervous system development and is required for myelination, and survival and proliferation of oligodendrocytes (PubMed:35455965).</text>
</comment>
<comment type="catalytic activity">
    <reaction evidence="6 10">
        <text>Zn(2+)(in) = Zn(2+)(out)</text>
        <dbReference type="Rhea" id="RHEA:29351"/>
        <dbReference type="ChEBI" id="CHEBI:29105"/>
    </reaction>
    <physiologicalReaction direction="left-to-right" evidence="6 10">
        <dbReference type="Rhea" id="RHEA:29352"/>
    </physiologicalReaction>
</comment>
<comment type="subunit">
    <text evidence="5 10">Homodimer (PubMed:36204728). Interacts with MCOLN1/TRPML1 (PubMed:25130899). Interacts with SLC30A1, SLC30A2, SLC30A3 and SLC30A4 (PubMed:36204728).</text>
</comment>
<comment type="interaction">
    <interactant intactId="EBI-25600012">
        <id>Q8TC26</id>
    </interactant>
    <interactant intactId="EBI-10982148">
        <id>Q9Y6M5</id>
        <label>SLC30A1</label>
    </interactant>
    <organismsDiffer>false</organismsDiffer>
    <experiments>3</experiments>
</comment>
<comment type="interaction">
    <interactant intactId="EBI-25600012">
        <id>Q8TC26</id>
    </interactant>
    <interactant intactId="EBI-8644112">
        <id>Q9BRI3</id>
        <label>SLC30A2</label>
    </interactant>
    <organismsDiffer>false</organismsDiffer>
    <experiments>3</experiments>
</comment>
<comment type="interaction">
    <interactant intactId="EBI-25600012">
        <id>Q8TC26</id>
    </interactant>
    <interactant intactId="EBI-10294651">
        <id>Q99726</id>
        <label>SLC30A3</label>
    </interactant>
    <organismsDiffer>false</organismsDiffer>
    <experiments>3</experiments>
</comment>
<comment type="interaction">
    <interactant intactId="EBI-25600012">
        <id>Q8TC26</id>
    </interactant>
    <interactant intactId="EBI-13918058">
        <id>O14863</id>
        <label>SLC30A4</label>
    </interactant>
    <organismsDiffer>false</organismsDiffer>
    <experiments>3</experiments>
</comment>
<comment type="subcellular location">
    <subcellularLocation>
        <location evidence="2">Cytoplasmic vesicle</location>
        <location evidence="2">Secretory vesicle</location>
        <location evidence="2">Synaptic vesicle membrane</location>
        <topology evidence="3">Multi-pass membrane protein</topology>
    </subcellularLocation>
    <subcellularLocation>
        <location evidence="1">Early endosome membrane</location>
        <topology evidence="3">Multi-pass membrane protein</topology>
    </subcellularLocation>
    <subcellularLocation>
        <location evidence="5">Late endosome membrane</location>
        <topology evidence="3">Multi-pass membrane protein</topology>
    </subcellularLocation>
    <subcellularLocation>
        <location evidence="5">Lysosome membrane</location>
        <topology evidence="3">Multi-pass membrane protein</topology>
    </subcellularLocation>
    <subcellularLocation>
        <location evidence="5">Cell membrane</location>
        <topology evidence="3">Multi-pass membrane protein</topology>
    </subcellularLocation>
    <text evidence="1">Glutamatergic synaptic vesicles.</text>
</comment>
<comment type="alternative products">
    <event type="alternative splicing"/>
    <isoform>
        <id>Q8TC26-1</id>
        <name>1</name>
        <sequence type="displayed"/>
    </isoform>
    <isoform>
        <id>Q8TC26-2</id>
        <name>2</name>
        <sequence type="described" ref="VSP_023329 VSP_023330 VSP_023331 VSP_023332"/>
    </isoform>
    <isoform>
        <id>Q8TC26-3</id>
        <name>3</name>
        <sequence type="described" ref="VSP_023328"/>
    </isoform>
</comment>
<comment type="tissue specificity">
    <text evidence="5">Widely expressed. High expression is detected in brain, lung and testis.</text>
</comment>
<comment type="disease" evidence="8 9">
    <disease id="DI-06609">
        <name>Leukodystrophy, hypomyelinating, 25</name>
        <acronym>HLD25</acronym>
        <description>A form of hypomyelinating leukodystrophy, a group of heterogeneous disorders characterized by persistent deficit of myelin observed on brain imaging. HLD25 is an autosomal dominant form with onset in early infancy and characterized by nystagmus, hypotonia, and delayed global development. Most patients show gradual clinical improvement over time with resolution of the nystagmus in early childhood. Many achieve developmental milestones and may have normal cognition, although some affected individuals may have persistent neurologic deficits. Brain imaging shows hypomyelination that may also improve with time.</description>
        <dbReference type="MIM" id="620243"/>
    </disease>
    <text>The disease is caused by variants affecting the gene represented in this entry.</text>
</comment>
<comment type="miscellaneous">
    <molecule>Isoform 2</molecule>
    <text evidence="12">May be produced at very low levels due to a premature stop codon in the mRNA, leading to nonsense-mediated mRNA decay.</text>
</comment>
<comment type="miscellaneous">
    <molecule>Isoform 3</molecule>
    <text evidence="12">Dubious isoform that could be a cloning artifact.</text>
</comment>
<comment type="similarity">
    <text evidence="12">Belongs to the TMEM163 family.</text>
</comment>
<comment type="sequence caution" evidence="12">
    <conflict type="erroneous initiation">
        <sequence resource="EMBL-CDS" id="CAH10592"/>
    </conflict>
    <text>Extended N-terminus.</text>
</comment>
<feature type="chain" id="PRO_0000278539" description="Transmembrane protein 163">
    <location>
        <begin position="1"/>
        <end position="289"/>
    </location>
</feature>
<feature type="topological domain" description="Cytoplasmic" evidence="3">
    <location>
        <begin position="1"/>
        <end position="88"/>
    </location>
</feature>
<feature type="transmembrane region" description="Helical" evidence="3">
    <location>
        <begin position="89"/>
        <end position="109"/>
    </location>
</feature>
<feature type="topological domain" description="Extracellular" evidence="3">
    <location>
        <begin position="110"/>
        <end position="116"/>
    </location>
</feature>
<feature type="transmembrane region" description="Helical" evidence="3">
    <location>
        <begin position="117"/>
        <end position="137"/>
    </location>
</feature>
<feature type="topological domain" description="Cytoplasmic" evidence="3">
    <location>
        <begin position="138"/>
        <end position="150"/>
    </location>
</feature>
<feature type="transmembrane region" description="Helical" evidence="3">
    <location>
        <begin position="151"/>
        <end position="171"/>
    </location>
</feature>
<feature type="topological domain" description="Extracellular" evidence="3">
    <location>
        <begin position="172"/>
        <end position="187"/>
    </location>
</feature>
<feature type="transmembrane region" description="Helical" evidence="3">
    <location>
        <begin position="188"/>
        <end position="208"/>
    </location>
</feature>
<feature type="topological domain" description="Cytoplasmic" evidence="3">
    <location>
        <begin position="209"/>
        <end position="217"/>
    </location>
</feature>
<feature type="transmembrane region" description="Helical" evidence="3">
    <location>
        <begin position="218"/>
        <end position="238"/>
    </location>
</feature>
<feature type="topological domain" description="Extracellular" evidence="3">
    <location>
        <begin position="239"/>
        <end position="255"/>
    </location>
</feature>
<feature type="transmembrane region" description="Helical" evidence="3">
    <location>
        <begin position="256"/>
        <end position="276"/>
    </location>
</feature>
<feature type="topological domain" description="Cytoplasmic" evidence="3">
    <location>
        <begin position="277"/>
        <end position="289"/>
    </location>
</feature>
<feature type="region of interest" description="Disordered" evidence="4">
    <location>
        <begin position="1"/>
        <end position="65"/>
    </location>
</feature>
<feature type="region of interest" description="Required for interaction with MCOLN1" evidence="5">
    <location>
        <begin position="42"/>
        <end position="72"/>
    </location>
</feature>
<feature type="compositionally biased region" description="Pro residues" evidence="4">
    <location>
        <begin position="16"/>
        <end position="36"/>
    </location>
</feature>
<feature type="modified residue" description="Phosphoserine" evidence="1">
    <location>
        <position position="11"/>
    </location>
</feature>
<feature type="modified residue" description="Phosphoserine" evidence="2">
    <location>
        <position position="55"/>
    </location>
</feature>
<feature type="modified residue" description="Phosphoserine" evidence="2">
    <location>
        <position position="57"/>
    </location>
</feature>
<feature type="modified residue" description="Phosphoserine" evidence="2">
    <location>
        <position position="61"/>
    </location>
</feature>
<feature type="splice variant" id="VSP_023328" description="In isoform 3." evidence="11">
    <location>
        <begin position="1"/>
        <end position="208"/>
    </location>
</feature>
<feature type="splice variant" id="VSP_023329" description="In isoform 2." evidence="11">
    <location>
        <begin position="1"/>
        <end position="60"/>
    </location>
</feature>
<feature type="splice variant" id="VSP_023330" description="In isoform 2." evidence="11">
    <original>SDGLEDRG</original>
    <variation>MLPVSRTC</variation>
    <location>
        <begin position="61"/>
        <end position="68"/>
    </location>
</feature>
<feature type="splice variant" id="VSP_023331" description="In isoform 2." evidence="11">
    <original>IACVILGVIF</original>
    <variation>MTISCSVSPF</variation>
    <location>
        <begin position="153"/>
        <end position="162"/>
    </location>
</feature>
<feature type="splice variant" id="VSP_023332" description="In isoform 2." evidence="11">
    <location>
        <begin position="163"/>
        <end position="289"/>
    </location>
</feature>
<feature type="sequence variant" id="VAR_088115" description="Results in decreased zinc efflux; dbSNP:rs531340951." evidence="6">
    <original>S</original>
    <variation>R</variation>
    <location>
        <position position="61"/>
    </location>
</feature>
<feature type="sequence variant" id="VAR_088116" description="In HLD25; does not rescue developmental defects and myelin deficit in zebrafish morphants but results in a more severe phenotype; affects cell development and survival when expressed in oligodendroglial cells." evidence="8 9">
    <original>L</original>
    <variation>P</variation>
    <location>
        <position position="76"/>
    </location>
</feature>
<feature type="sequence variant" id="VAR_088117" description="In HLD25; severely decreased function in zinc transport; does not rescue developmental defects and myelin deficit in zebrafish morphants but results in a more severe phenotype." evidence="8">
    <original>L</original>
    <variation>R</variation>
    <location>
        <position position="76"/>
    </location>
</feature>
<feature type="sequence variant" id="VAR_088118" description="Results in decreased zinc efflux; dbSNP:rs202199940." evidence="6">
    <original>S</original>
    <variation>C</variation>
    <location>
        <position position="95"/>
    </location>
</feature>
<feature type="sequence variant" id="VAR_088119" description="In HLD25; results in decreased function in zinc transport; affects cell development and survival when expressed in oligodendroglial cells." evidence="9">
    <original>R</original>
    <variation>C</variation>
    <location>
        <position position="138"/>
    </location>
</feature>
<feature type="sequence variant" id="VAR_088120" description="In HLD25; uncertain significance; results in decreased function in zinc transport; affects cell development and survival when expressed in oligodendroglial cells." evidence="9">
    <original>H</original>
    <variation>R</variation>
    <location>
        <position position="146"/>
    </location>
</feature>
<feature type="sequence variant" id="VAR_088121" description="Results in decreased zinc efflux; dbSNP:rs113424259." evidence="6">
    <original>S</original>
    <variation>P</variation>
    <location>
        <position position="193"/>
    </location>
</feature>
<feature type="sequence variant" id="VAR_088122" description="Results in decreased zinc efflux; dbSNP:rs371768391." evidence="6">
    <original>E</original>
    <variation>K</variation>
    <location>
        <position position="286"/>
    </location>
</feature>
<feature type="mutagenesis site" description="Loss of interaction with MCOLN1." evidence="5">
    <location>
        <begin position="1"/>
        <end position="72"/>
    </location>
</feature>
<feature type="mutagenesis site" description="Reduced interaction with MCOLN1." evidence="5">
    <location>
        <begin position="1"/>
        <end position="42"/>
    </location>
</feature>
<feature type="mutagenesis site" description="Severely reduced zinc efflux; when associated with A-128." evidence="6">
    <original>D</original>
    <variation>A</variation>
    <location>
        <position position="124"/>
    </location>
</feature>
<feature type="mutagenesis site" description="Severely reduced zinc efflux; when associated with A-124." evidence="6">
    <original>D</original>
    <variation>A</variation>
    <location>
        <position position="128"/>
    </location>
</feature>
<proteinExistence type="evidence at protein level"/>
<organism>
    <name type="scientific">Homo sapiens</name>
    <name type="common">Human</name>
    <dbReference type="NCBI Taxonomy" id="9606"/>
    <lineage>
        <taxon>Eukaryota</taxon>
        <taxon>Metazoa</taxon>
        <taxon>Chordata</taxon>
        <taxon>Craniata</taxon>
        <taxon>Vertebrata</taxon>
        <taxon>Euteleostomi</taxon>
        <taxon>Mammalia</taxon>
        <taxon>Eutheria</taxon>
        <taxon>Euarchontoglires</taxon>
        <taxon>Primates</taxon>
        <taxon>Haplorrhini</taxon>
        <taxon>Catarrhini</taxon>
        <taxon>Hominidae</taxon>
        <taxon>Homo</taxon>
    </lineage>
</organism>
<evidence type="ECO:0000250" key="1">
    <source>
        <dbReference type="UniProtKB" id="A9CMA6"/>
    </source>
</evidence>
<evidence type="ECO:0000250" key="2">
    <source>
        <dbReference type="UniProtKB" id="Q8C996"/>
    </source>
</evidence>
<evidence type="ECO:0000255" key="3"/>
<evidence type="ECO:0000256" key="4">
    <source>
        <dbReference type="SAM" id="MobiDB-lite"/>
    </source>
</evidence>
<evidence type="ECO:0000269" key="5">
    <source>
    </source>
</evidence>
<evidence type="ECO:0000269" key="6">
    <source>
    </source>
</evidence>
<evidence type="ECO:0000269" key="7">
    <source>
    </source>
</evidence>
<evidence type="ECO:0000269" key="8">
    <source>
    </source>
</evidence>
<evidence type="ECO:0000269" key="9">
    <source>
    </source>
</evidence>
<evidence type="ECO:0000269" key="10">
    <source>
    </source>
</evidence>
<evidence type="ECO:0000303" key="11">
    <source>
    </source>
</evidence>
<evidence type="ECO:0000305" key="12"/>
<keyword id="KW-0025">Alternative splicing</keyword>
<keyword id="KW-1003">Cell membrane</keyword>
<keyword id="KW-0968">Cytoplasmic vesicle</keyword>
<keyword id="KW-0225">Disease variant</keyword>
<keyword id="KW-0967">Endosome</keyword>
<keyword id="KW-1026">Leukodystrophy</keyword>
<keyword id="KW-0458">Lysosome</keyword>
<keyword id="KW-0472">Membrane</keyword>
<keyword id="KW-0597">Phosphoprotein</keyword>
<keyword id="KW-1267">Proteomics identification</keyword>
<keyword id="KW-1185">Reference proteome</keyword>
<keyword id="KW-0770">Synapse</keyword>
<keyword id="KW-0812">Transmembrane</keyword>
<keyword id="KW-1133">Transmembrane helix</keyword>
<keyword id="KW-0813">Transport</keyword>
<keyword id="KW-0862">Zinc</keyword>